<gene>
    <name evidence="4" type="primary">vha-18</name>
    <name evidence="4" type="ORF">F52E1.10</name>
</gene>
<reference key="1">
    <citation type="journal article" date="1998" name="Science">
        <title>Genome sequence of the nematode C. elegans: a platform for investigating biology.</title>
        <authorList>
            <consortium name="The C. elegans sequencing consortium"/>
        </authorList>
    </citation>
    <scope>NUCLEOTIDE SEQUENCE [LARGE SCALE GENOMIC DNA]</scope>
    <source>
        <strain>Bristol N2</strain>
    </source>
</reference>
<proteinExistence type="inferred from homology"/>
<dbReference type="EMBL" id="BX284605">
    <property type="protein sequence ID" value="CCD70812.1"/>
    <property type="molecule type" value="Genomic_DNA"/>
</dbReference>
<dbReference type="PIR" id="F89130">
    <property type="entry name" value="F89130"/>
</dbReference>
<dbReference type="RefSeq" id="NP_505171.1">
    <property type="nucleotide sequence ID" value="NM_072770.7"/>
</dbReference>
<dbReference type="SMR" id="Q20666"/>
<dbReference type="BioGRID" id="44264">
    <property type="interactions" value="2"/>
</dbReference>
<dbReference type="FunCoup" id="Q20666">
    <property type="interactions" value="768"/>
</dbReference>
<dbReference type="STRING" id="6239.F52E1.10.2"/>
<dbReference type="TCDB" id="3.A.2.2.7">
    <property type="family name" value="the h+- or na+-translocating f-type, v-type and a-type atpase (f-atpase) superfamily"/>
</dbReference>
<dbReference type="PaxDb" id="6239-F52E1.10"/>
<dbReference type="PeptideAtlas" id="Q20666"/>
<dbReference type="EnsemblMetazoa" id="F52E1.10.1">
    <property type="protein sequence ID" value="F52E1.10.1"/>
    <property type="gene ID" value="WBGene00018698"/>
</dbReference>
<dbReference type="GeneID" id="179223"/>
<dbReference type="KEGG" id="cel:CELE_F52E1.10"/>
<dbReference type="AGR" id="WB:WBGene00018698"/>
<dbReference type="CTD" id="179223"/>
<dbReference type="WormBase" id="F52E1.10">
    <property type="protein sequence ID" value="CE04638"/>
    <property type="gene ID" value="WBGene00018698"/>
    <property type="gene designation" value="vha-18"/>
</dbReference>
<dbReference type="eggNOG" id="KOG2759">
    <property type="taxonomic scope" value="Eukaryota"/>
</dbReference>
<dbReference type="GeneTree" id="ENSGT00390000003289"/>
<dbReference type="HOGENOM" id="CLU_025709_4_0_1"/>
<dbReference type="InParanoid" id="Q20666"/>
<dbReference type="OMA" id="MKLCTHN"/>
<dbReference type="OrthoDB" id="10263554at2759"/>
<dbReference type="PhylomeDB" id="Q20666"/>
<dbReference type="PRO" id="PR:Q20666"/>
<dbReference type="Proteomes" id="UP000001940">
    <property type="component" value="Chromosome V"/>
</dbReference>
<dbReference type="Bgee" id="WBGene00018698">
    <property type="expression patterns" value="Expressed in germ line (C elegans) and 4 other cell types or tissues"/>
</dbReference>
<dbReference type="GO" id="GO:0000221">
    <property type="term" value="C:vacuolar proton-transporting V-type ATPase, V1 domain"/>
    <property type="evidence" value="ECO:0007669"/>
    <property type="project" value="InterPro"/>
</dbReference>
<dbReference type="GO" id="GO:0046961">
    <property type="term" value="F:proton-transporting ATPase activity, rotational mechanism"/>
    <property type="evidence" value="ECO:0007669"/>
    <property type="project" value="InterPro"/>
</dbReference>
<dbReference type="CDD" id="cd00256">
    <property type="entry name" value="VATPase_H"/>
    <property type="match status" value="1"/>
</dbReference>
<dbReference type="Gene3D" id="1.25.10.10">
    <property type="entry name" value="Leucine-rich Repeat Variant"/>
    <property type="match status" value="1"/>
</dbReference>
<dbReference type="Gene3D" id="1.25.40.150">
    <property type="entry name" value="V-type ATPase, subunit H, C-terminal domain"/>
    <property type="match status" value="1"/>
</dbReference>
<dbReference type="InterPro" id="IPR011989">
    <property type="entry name" value="ARM-like"/>
</dbReference>
<dbReference type="InterPro" id="IPR016024">
    <property type="entry name" value="ARM-type_fold"/>
</dbReference>
<dbReference type="InterPro" id="IPR004908">
    <property type="entry name" value="ATPase_V1-cplx_hsu"/>
</dbReference>
<dbReference type="InterPro" id="IPR011987">
    <property type="entry name" value="ATPase_V1-cplx_hsu_C"/>
</dbReference>
<dbReference type="InterPro" id="IPR038497">
    <property type="entry name" value="ATPase_V1-cplx_hsu_C_sf"/>
</dbReference>
<dbReference type="PANTHER" id="PTHR10698">
    <property type="entry name" value="V-TYPE PROTON ATPASE SUBUNIT H"/>
    <property type="match status" value="1"/>
</dbReference>
<dbReference type="PANTHER" id="PTHR10698:SF1">
    <property type="entry name" value="V-TYPE PROTON ATPASE SUBUNIT H 1-RELATED"/>
    <property type="match status" value="1"/>
</dbReference>
<dbReference type="Pfam" id="PF11698">
    <property type="entry name" value="V-ATPase_H_C"/>
    <property type="match status" value="1"/>
</dbReference>
<dbReference type="Pfam" id="PF03224">
    <property type="entry name" value="V-ATPase_H_N"/>
    <property type="match status" value="1"/>
</dbReference>
<dbReference type="PIRSF" id="PIRSF032184">
    <property type="entry name" value="ATPase_V1_H"/>
    <property type="match status" value="1"/>
</dbReference>
<dbReference type="SUPFAM" id="SSF48371">
    <property type="entry name" value="ARM repeat"/>
    <property type="match status" value="1"/>
</dbReference>
<sequence length="451" mass="52360">MVFGENQDLIRTHFQKEADKVRAMKTNWGLFTRTRMIAQSDYDFIVTYQQAENEAERSTVLSVFKEKAVYAFVHLMSQISKDDYVRYTLTLIDDMLREDVTRTIIFEDVAVLLKRSPFSFFMGLLHRQDQYIVHITFSILTKMAVFGNIKLSGDELDYCMGSLKEAMNRGTNNDYIVTAVRCMQTLFRFDPYRVSFVNINGYDSLTHALYSTRKCGFQIQYQIIFCMWLLTFNGHAAEVALSGNLIQTISGILGNCQKEKVIRIVVSTLRNLITSNQDVYMKKQAALQMIQNRIPTKLDHLENRKFTDVDLVEDMVYLQTELKKVVQVLTSFDEYENELRQGSLHWSPAHKCEVFWNENAHRLNDNRQELLKLLVAMLEKSNDPLVLCVAAHDIGEFVRYYPRGKLKVEQLGGKEAMMRLLTVKDPNVRYHALLAAQKLMINNWKDLGLEI</sequence>
<evidence type="ECO:0000250" key="1">
    <source>
        <dbReference type="UniProtKB" id="O46563"/>
    </source>
</evidence>
<evidence type="ECO:0000250" key="2">
    <source>
        <dbReference type="UniProtKB" id="P41807"/>
    </source>
</evidence>
<evidence type="ECO:0000305" key="3"/>
<evidence type="ECO:0000312" key="4">
    <source>
        <dbReference type="WormBase" id="F52E1.10"/>
    </source>
</evidence>
<feature type="chain" id="PRO_0000124198" description="Probable V-type proton ATPase subunit H 1">
    <location>
        <begin position="1"/>
        <end position="451"/>
    </location>
</feature>
<name>VATH1_CAEEL</name>
<comment type="function">
    <text evidence="1 2">Subunit of the V1 complex of vacuolar(H+)-ATPase (V-ATPase), a multisubunit enzyme composed of a peripheral complex (V1) that hydrolyzes ATP and a membrane integral complex (V0) that translocates protons (By similarity). V-ATPase is responsible for acidifying and maintaining the pH of intracellular compartments and in some cell types, is targeted to the plasma membrane, where it is responsible for acidifying the extracellular environment (By similarity). Subunit H is essential for V-ATPase activity, but not for the assembly of the complex (By similarity).</text>
</comment>
<comment type="subunit">
    <text evidence="1">V-ATPase is a heteromultimeric enzyme made up of two complexes: the ATP-hydrolytic V1 complex and the proton translocation V0 complex (By similarity). The V1 complex consists of three catalytic AB heterodimers that form a heterohexamer, three peripheral stalks each consisting of EG heterodimers, one central rotor including subunits D and F, and the regulatory subunits C and H (By similarity). The proton translocation complex V0 consists of the proton transport subunit a, a ring of proteolipid subunits c9c'', rotary subunit d, subunits e and f, and the accessory subunits vah-19/Ac45 and vah-20/PRR (By similarity).</text>
</comment>
<comment type="similarity">
    <text evidence="3">Belongs to the V-ATPase H subunit family.</text>
</comment>
<organism>
    <name type="scientific">Caenorhabditis elegans</name>
    <dbReference type="NCBI Taxonomy" id="6239"/>
    <lineage>
        <taxon>Eukaryota</taxon>
        <taxon>Metazoa</taxon>
        <taxon>Ecdysozoa</taxon>
        <taxon>Nematoda</taxon>
        <taxon>Chromadorea</taxon>
        <taxon>Rhabditida</taxon>
        <taxon>Rhabditina</taxon>
        <taxon>Rhabditomorpha</taxon>
        <taxon>Rhabditoidea</taxon>
        <taxon>Rhabditidae</taxon>
        <taxon>Peloderinae</taxon>
        <taxon>Caenorhabditis</taxon>
    </lineage>
</organism>
<accession>Q20666</accession>
<keyword id="KW-0375">Hydrogen ion transport</keyword>
<keyword id="KW-0406">Ion transport</keyword>
<keyword id="KW-1185">Reference proteome</keyword>
<keyword id="KW-0813">Transport</keyword>
<protein>
    <recommendedName>
        <fullName>Probable V-type proton ATPase subunit H 1</fullName>
        <shortName>V-ATPase subunit H 1</shortName>
    </recommendedName>
    <alternativeName>
        <fullName>Vacuolar proton pump subunit H 1</fullName>
    </alternativeName>
</protein>